<name>Y977_PELPD</name>
<feature type="chain" id="PRO_1000056841" description="Nucleotide-binding protein Ppro_0977">
    <location>
        <begin position="1"/>
        <end position="287"/>
    </location>
</feature>
<feature type="binding site" evidence="1">
    <location>
        <begin position="8"/>
        <end position="15"/>
    </location>
    <ligand>
        <name>ATP</name>
        <dbReference type="ChEBI" id="CHEBI:30616"/>
    </ligand>
</feature>
<feature type="binding site" evidence="1">
    <location>
        <begin position="59"/>
        <end position="62"/>
    </location>
    <ligand>
        <name>GTP</name>
        <dbReference type="ChEBI" id="CHEBI:37565"/>
    </ligand>
</feature>
<reference key="1">
    <citation type="submission" date="2006-10" db="EMBL/GenBank/DDBJ databases">
        <title>Complete sequence of chromosome of Pelobacter propionicus DSM 2379.</title>
        <authorList>
            <consortium name="US DOE Joint Genome Institute"/>
            <person name="Copeland A."/>
            <person name="Lucas S."/>
            <person name="Lapidus A."/>
            <person name="Barry K."/>
            <person name="Detter J.C."/>
            <person name="Glavina del Rio T."/>
            <person name="Hammon N."/>
            <person name="Israni S."/>
            <person name="Dalin E."/>
            <person name="Tice H."/>
            <person name="Pitluck S."/>
            <person name="Saunders E."/>
            <person name="Brettin T."/>
            <person name="Bruce D."/>
            <person name="Han C."/>
            <person name="Tapia R."/>
            <person name="Schmutz J."/>
            <person name="Larimer F."/>
            <person name="Land M."/>
            <person name="Hauser L."/>
            <person name="Kyrpides N."/>
            <person name="Kim E."/>
            <person name="Lovley D."/>
            <person name="Richardson P."/>
        </authorList>
    </citation>
    <scope>NUCLEOTIDE SEQUENCE [LARGE SCALE GENOMIC DNA]</scope>
    <source>
        <strain>DSM 2379 / NBRC 103807 / OttBd1</strain>
    </source>
</reference>
<organism>
    <name type="scientific">Pelobacter propionicus (strain DSM 2379 / NBRC 103807 / OttBd1)</name>
    <dbReference type="NCBI Taxonomy" id="338966"/>
    <lineage>
        <taxon>Bacteria</taxon>
        <taxon>Pseudomonadati</taxon>
        <taxon>Thermodesulfobacteriota</taxon>
        <taxon>Desulfuromonadia</taxon>
        <taxon>Desulfuromonadales</taxon>
        <taxon>Desulfuromonadaceae</taxon>
        <taxon>Pelobacter</taxon>
    </lineage>
</organism>
<accession>A1AMN5</accession>
<gene>
    <name type="ordered locus">Ppro_0977</name>
</gene>
<keyword id="KW-0067">ATP-binding</keyword>
<keyword id="KW-0342">GTP-binding</keyword>
<keyword id="KW-0547">Nucleotide-binding</keyword>
<keyword id="KW-1185">Reference proteome</keyword>
<comment type="function">
    <text evidence="1">Displays ATPase and GTPase activities.</text>
</comment>
<comment type="similarity">
    <text evidence="1">Belongs to the RapZ-like family.</text>
</comment>
<dbReference type="EMBL" id="CP000482">
    <property type="protein sequence ID" value="ABK98605.1"/>
    <property type="molecule type" value="Genomic_DNA"/>
</dbReference>
<dbReference type="RefSeq" id="WP_011734912.1">
    <property type="nucleotide sequence ID" value="NC_008609.1"/>
</dbReference>
<dbReference type="SMR" id="A1AMN5"/>
<dbReference type="STRING" id="338966.Ppro_0977"/>
<dbReference type="KEGG" id="ppd:Ppro_0977"/>
<dbReference type="eggNOG" id="COG1660">
    <property type="taxonomic scope" value="Bacteria"/>
</dbReference>
<dbReference type="HOGENOM" id="CLU_059558_0_0_7"/>
<dbReference type="OrthoDB" id="9784461at2"/>
<dbReference type="Proteomes" id="UP000006732">
    <property type="component" value="Chromosome"/>
</dbReference>
<dbReference type="GO" id="GO:0005524">
    <property type="term" value="F:ATP binding"/>
    <property type="evidence" value="ECO:0007669"/>
    <property type="project" value="UniProtKB-UniRule"/>
</dbReference>
<dbReference type="GO" id="GO:0005525">
    <property type="term" value="F:GTP binding"/>
    <property type="evidence" value="ECO:0007669"/>
    <property type="project" value="UniProtKB-UniRule"/>
</dbReference>
<dbReference type="Gene3D" id="3.40.50.300">
    <property type="entry name" value="P-loop containing nucleotide triphosphate hydrolases"/>
    <property type="match status" value="1"/>
</dbReference>
<dbReference type="HAMAP" id="MF_00636">
    <property type="entry name" value="RapZ_like"/>
    <property type="match status" value="1"/>
</dbReference>
<dbReference type="InterPro" id="IPR027417">
    <property type="entry name" value="P-loop_NTPase"/>
</dbReference>
<dbReference type="InterPro" id="IPR005337">
    <property type="entry name" value="RapZ-like"/>
</dbReference>
<dbReference type="InterPro" id="IPR053930">
    <property type="entry name" value="RapZ-like_N"/>
</dbReference>
<dbReference type="InterPro" id="IPR053931">
    <property type="entry name" value="RapZ_C"/>
</dbReference>
<dbReference type="NCBIfam" id="NF003828">
    <property type="entry name" value="PRK05416.1"/>
    <property type="match status" value="1"/>
</dbReference>
<dbReference type="PANTHER" id="PTHR30448">
    <property type="entry name" value="RNASE ADAPTER PROTEIN RAPZ"/>
    <property type="match status" value="1"/>
</dbReference>
<dbReference type="PANTHER" id="PTHR30448:SF0">
    <property type="entry name" value="RNASE ADAPTER PROTEIN RAPZ"/>
    <property type="match status" value="1"/>
</dbReference>
<dbReference type="Pfam" id="PF22740">
    <property type="entry name" value="PapZ_C"/>
    <property type="match status" value="1"/>
</dbReference>
<dbReference type="Pfam" id="PF03668">
    <property type="entry name" value="RapZ-like_N"/>
    <property type="match status" value="1"/>
</dbReference>
<dbReference type="PIRSF" id="PIRSF005052">
    <property type="entry name" value="P-loopkin"/>
    <property type="match status" value="1"/>
</dbReference>
<dbReference type="SUPFAM" id="SSF52540">
    <property type="entry name" value="P-loop containing nucleoside triphosphate hydrolases"/>
    <property type="match status" value="1"/>
</dbReference>
<protein>
    <recommendedName>
        <fullName evidence="1">Nucleotide-binding protein Ppro_0977</fullName>
    </recommendedName>
</protein>
<evidence type="ECO:0000255" key="1">
    <source>
        <dbReference type="HAMAP-Rule" id="MF_00636"/>
    </source>
</evidence>
<proteinExistence type="inferred from homology"/>
<sequence length="287" mass="32886">MRIIVITGMSGSGKSTAVRALEDEGFYCIDNLPMRLFRPFVELIEKSGDSYRGIVLVADIRGREFLKGFENTFQTLRDQGHGVEIFFIDASDDVLIRRFSETRRRHPAEEQCTVSEGIRIERERLSTLRQMATRIIDSSDFNVHQLKELILRIVRGEDAETPMVIEIKSFGFRYGIPLESSIVMDVRFLPNPFFVPRLKPGSGLDDEVREYILDNPKTATFLDCFFPMLDMLVPAHRQEGKYYLTISIGCTGGRHRSVAIAEATAMYLRADWPTVRITHRDIEKGQQ</sequence>